<keyword id="KW-0998">Cell outer membrane</keyword>
<keyword id="KW-0961">Cell wall biogenesis/degradation</keyword>
<keyword id="KW-0449">Lipoprotein</keyword>
<keyword id="KW-0456">Lyase</keyword>
<keyword id="KW-0472">Membrane</keyword>
<keyword id="KW-0564">Palmitate</keyword>
<keyword id="KW-0732">Signal</keyword>
<dbReference type="EC" id="4.2.2.n1" evidence="1"/>
<dbReference type="EMBL" id="CP000247">
    <property type="protein sequence ID" value="ABG70941.1"/>
    <property type="status" value="ALT_INIT"/>
    <property type="molecule type" value="Genomic_DNA"/>
</dbReference>
<dbReference type="RefSeq" id="WP_000760323.1">
    <property type="nucleotide sequence ID" value="NC_008253.1"/>
</dbReference>
<dbReference type="SMR" id="Q0TDN8"/>
<dbReference type="CAZy" id="GH23">
    <property type="family name" value="Glycoside Hydrolase Family 23"/>
</dbReference>
<dbReference type="GeneID" id="86861053"/>
<dbReference type="KEGG" id="ecp:ECP_2957"/>
<dbReference type="HOGENOM" id="CLU_044583_0_0_6"/>
<dbReference type="Proteomes" id="UP000009182">
    <property type="component" value="Chromosome"/>
</dbReference>
<dbReference type="GO" id="GO:0009279">
    <property type="term" value="C:cell outer membrane"/>
    <property type="evidence" value="ECO:0007669"/>
    <property type="project" value="UniProtKB-SubCell"/>
</dbReference>
<dbReference type="GO" id="GO:0016798">
    <property type="term" value="F:hydrolase activity, acting on glycosyl bonds"/>
    <property type="evidence" value="ECO:0007669"/>
    <property type="project" value="InterPro"/>
</dbReference>
<dbReference type="GO" id="GO:0008933">
    <property type="term" value="F:peptidoglycan lytic transglycosylase activity"/>
    <property type="evidence" value="ECO:0007669"/>
    <property type="project" value="UniProtKB-UniRule"/>
</dbReference>
<dbReference type="GO" id="GO:0016998">
    <property type="term" value="P:cell wall macromolecule catabolic process"/>
    <property type="evidence" value="ECO:0007669"/>
    <property type="project" value="UniProtKB-UniRule"/>
</dbReference>
<dbReference type="GO" id="GO:0071555">
    <property type="term" value="P:cell wall organization"/>
    <property type="evidence" value="ECO:0007669"/>
    <property type="project" value="UniProtKB-KW"/>
</dbReference>
<dbReference type="GO" id="GO:0000270">
    <property type="term" value="P:peptidoglycan metabolic process"/>
    <property type="evidence" value="ECO:0007669"/>
    <property type="project" value="InterPro"/>
</dbReference>
<dbReference type="CDD" id="cd16893">
    <property type="entry name" value="LT_MltC_MltE"/>
    <property type="match status" value="1"/>
</dbReference>
<dbReference type="FunFam" id="1.10.530.10:FF:000002">
    <property type="entry name" value="Membrane-bound lytic murein transglycosylase C"/>
    <property type="match status" value="1"/>
</dbReference>
<dbReference type="Gene3D" id="1.10.530.10">
    <property type="match status" value="1"/>
</dbReference>
<dbReference type="HAMAP" id="MF_01616">
    <property type="entry name" value="MltC"/>
    <property type="match status" value="1"/>
</dbReference>
<dbReference type="InterPro" id="IPR023346">
    <property type="entry name" value="Lysozyme-like_dom_sf"/>
</dbReference>
<dbReference type="InterPro" id="IPR023664">
    <property type="entry name" value="Murein_transglycosylaseC"/>
</dbReference>
<dbReference type="InterPro" id="IPR024570">
    <property type="entry name" value="Murein_transglycosylaseC_N"/>
</dbReference>
<dbReference type="InterPro" id="IPR000189">
    <property type="entry name" value="Transglyc_AS"/>
</dbReference>
<dbReference type="InterPro" id="IPR008258">
    <property type="entry name" value="Transglycosylase_SLT_dom_1"/>
</dbReference>
<dbReference type="NCBIfam" id="NF008670">
    <property type="entry name" value="PRK11671.1"/>
    <property type="match status" value="1"/>
</dbReference>
<dbReference type="PANTHER" id="PTHR37423:SF2">
    <property type="entry name" value="MEMBRANE-BOUND LYTIC MUREIN TRANSGLYCOSYLASE C"/>
    <property type="match status" value="1"/>
</dbReference>
<dbReference type="PANTHER" id="PTHR37423">
    <property type="entry name" value="SOLUBLE LYTIC MUREIN TRANSGLYCOSYLASE-RELATED"/>
    <property type="match status" value="1"/>
</dbReference>
<dbReference type="Pfam" id="PF11873">
    <property type="entry name" value="Mltc_N"/>
    <property type="match status" value="1"/>
</dbReference>
<dbReference type="Pfam" id="PF01464">
    <property type="entry name" value="SLT"/>
    <property type="match status" value="1"/>
</dbReference>
<dbReference type="SUPFAM" id="SSF53955">
    <property type="entry name" value="Lysozyme-like"/>
    <property type="match status" value="1"/>
</dbReference>
<dbReference type="PROSITE" id="PS51257">
    <property type="entry name" value="PROKAR_LIPOPROTEIN"/>
    <property type="match status" value="1"/>
</dbReference>
<dbReference type="PROSITE" id="PS00922">
    <property type="entry name" value="TRANSGLYCOSYLASE"/>
    <property type="match status" value="1"/>
</dbReference>
<accession>Q0TDN8</accession>
<name>MLTC_ECOL5</name>
<reference key="1">
    <citation type="journal article" date="2006" name="Mol. Microbiol.">
        <title>Role of pathogenicity island-associated integrases in the genome plasticity of uropathogenic Escherichia coli strain 536.</title>
        <authorList>
            <person name="Hochhut B."/>
            <person name="Wilde C."/>
            <person name="Balling G."/>
            <person name="Middendorf B."/>
            <person name="Dobrindt U."/>
            <person name="Brzuszkiewicz E."/>
            <person name="Gottschalk G."/>
            <person name="Carniel E."/>
            <person name="Hacker J."/>
        </authorList>
    </citation>
    <scope>NUCLEOTIDE SEQUENCE [LARGE SCALE GENOMIC DNA]</scope>
    <source>
        <strain>536 / UPEC</strain>
    </source>
</reference>
<protein>
    <recommendedName>
        <fullName evidence="1">Membrane-bound lytic murein transglycosylase C</fullName>
        <ecNumber evidence="1">4.2.2.n1</ecNumber>
    </recommendedName>
    <alternativeName>
        <fullName evidence="1">Murein lyase C</fullName>
    </alternativeName>
</protein>
<comment type="function">
    <text evidence="1">Murein-degrading enzyme. May play a role in recycling of muropeptides during cell elongation and/or cell division.</text>
</comment>
<comment type="catalytic activity">
    <reaction evidence="1">
        <text>Exolytic cleavage of the (1-&gt;4)-beta-glycosidic linkage between N-acetylmuramic acid (MurNAc) and N-acetylglucosamine (GlcNAc) residues in peptidoglycan, from either the reducing or the non-reducing ends of the peptidoglycan chains, with concomitant formation of a 1,6-anhydrobond in the MurNAc residue.</text>
        <dbReference type="EC" id="4.2.2.n1"/>
    </reaction>
</comment>
<comment type="subcellular location">
    <subcellularLocation>
        <location evidence="1">Cell outer membrane</location>
        <topology evidence="1">Lipid-anchor</topology>
    </subcellularLocation>
</comment>
<comment type="similarity">
    <text evidence="1">Belongs to the transglycosylase Slt family.</text>
</comment>
<comment type="sequence caution" evidence="2">
    <conflict type="erroneous initiation">
        <sequence resource="EMBL-CDS" id="ABG70941"/>
    </conflict>
</comment>
<gene>
    <name evidence="1" type="primary">mltC</name>
    <name type="ordered locus">ECP_2957</name>
</gene>
<proteinExistence type="inferred from homology"/>
<feature type="signal peptide" evidence="1">
    <location>
        <begin position="1"/>
        <end position="16"/>
    </location>
</feature>
<feature type="chain" id="PRO_0000335583" description="Membrane-bound lytic murein transglycosylase C">
    <location>
        <begin position="17"/>
        <end position="359"/>
    </location>
</feature>
<feature type="lipid moiety-binding region" description="N-palmitoyl cysteine" evidence="1">
    <location>
        <position position="17"/>
    </location>
</feature>
<feature type="lipid moiety-binding region" description="S-diacylglycerol cysteine" evidence="1">
    <location>
        <position position="17"/>
    </location>
</feature>
<sequence length="359" mass="40113">MKKYLALALIAPLLISCSTTKKGDTYNEAWVKDTNGFDILMGQFAHNIENIWGFKEVVIAGPKDYVKYTDQYQTRSHINFDDGTITIETIAGTEPAAHLRRAIIKTLLMGDDPSSVDLYSDVDDITISKEPFLYGQVVDNTGQPIRWEGRASNFADYLLKNRLKSRSNGLRIIYSVTINMVPNHLDKRAHKYLGMVRQASRKYGVDESLILAIMQTESSFNPYAVSRSDALGLMQVVQHTAGKDVFRSQGKSGTPSRSFLFDPASNIDTGTAYLAMLNNVYLGGIDNPTSRRYAVITAYNGGAGSVLRVFSNDKIQAANIINTMTPGDVYQTLTTRHPSAESRRYLYKVNTAQKSYRRR</sequence>
<organism>
    <name type="scientific">Escherichia coli O6:K15:H31 (strain 536 / UPEC)</name>
    <dbReference type="NCBI Taxonomy" id="362663"/>
    <lineage>
        <taxon>Bacteria</taxon>
        <taxon>Pseudomonadati</taxon>
        <taxon>Pseudomonadota</taxon>
        <taxon>Gammaproteobacteria</taxon>
        <taxon>Enterobacterales</taxon>
        <taxon>Enterobacteriaceae</taxon>
        <taxon>Escherichia</taxon>
    </lineage>
</organism>
<evidence type="ECO:0000255" key="1">
    <source>
        <dbReference type="HAMAP-Rule" id="MF_01616"/>
    </source>
</evidence>
<evidence type="ECO:0000305" key="2"/>